<reference key="1">
    <citation type="journal article" date="2004" name="Nat. Biotechnol.">
        <title>The genome sequence of the anaerobic, sulfate-reducing bacterium Desulfovibrio vulgaris Hildenborough.</title>
        <authorList>
            <person name="Heidelberg J.F."/>
            <person name="Seshadri R."/>
            <person name="Haveman S.A."/>
            <person name="Hemme C.L."/>
            <person name="Paulsen I.T."/>
            <person name="Kolonay J.F."/>
            <person name="Eisen J.A."/>
            <person name="Ward N.L."/>
            <person name="Methe B.A."/>
            <person name="Brinkac L.M."/>
            <person name="Daugherty S.C."/>
            <person name="DeBoy R.T."/>
            <person name="Dodson R.J."/>
            <person name="Durkin A.S."/>
            <person name="Madupu R."/>
            <person name="Nelson W.C."/>
            <person name="Sullivan S.A."/>
            <person name="Fouts D.E."/>
            <person name="Haft D.H."/>
            <person name="Selengut J."/>
            <person name="Peterson J.D."/>
            <person name="Davidsen T.M."/>
            <person name="Zafar N."/>
            <person name="Zhou L."/>
            <person name="Radune D."/>
            <person name="Dimitrov G."/>
            <person name="Hance M."/>
            <person name="Tran K."/>
            <person name="Khouri H.M."/>
            <person name="Gill J."/>
            <person name="Utterback T.R."/>
            <person name="Feldblyum T.V."/>
            <person name="Wall J.D."/>
            <person name="Voordouw G."/>
            <person name="Fraser C.M."/>
        </authorList>
    </citation>
    <scope>NUCLEOTIDE SEQUENCE [LARGE SCALE GENOMIC DNA]</scope>
    <source>
        <strain>ATCC 29579 / DSM 644 / CCUG 34227 / NCIMB 8303 / VKM B-1760 / Hildenborough</strain>
    </source>
</reference>
<accession>Q726J4</accession>
<protein>
    <recommendedName>
        <fullName evidence="1">Carbamoyl phosphate synthase small chain</fullName>
        <ecNumber evidence="1">6.3.5.5</ecNumber>
    </recommendedName>
    <alternativeName>
        <fullName evidence="1">Carbamoyl phosphate synthetase glutamine chain</fullName>
    </alternativeName>
</protein>
<keyword id="KW-0028">Amino-acid biosynthesis</keyword>
<keyword id="KW-0055">Arginine biosynthesis</keyword>
<keyword id="KW-0067">ATP-binding</keyword>
<keyword id="KW-0315">Glutamine amidotransferase</keyword>
<keyword id="KW-0436">Ligase</keyword>
<keyword id="KW-0547">Nucleotide-binding</keyword>
<keyword id="KW-0665">Pyrimidine biosynthesis</keyword>
<keyword id="KW-1185">Reference proteome</keyword>
<proteinExistence type="evidence at protein level"/>
<evidence type="ECO:0000255" key="1">
    <source>
        <dbReference type="HAMAP-Rule" id="MF_01209"/>
    </source>
</evidence>
<name>CARA_NITV2</name>
<gene>
    <name evidence="1" type="primary">carA</name>
    <name type="ordered locus">DVU_3113</name>
</gene>
<dbReference type="EC" id="6.3.5.5" evidence="1"/>
<dbReference type="EMBL" id="AE017285">
    <property type="protein sequence ID" value="AAS97584.1"/>
    <property type="molecule type" value="Genomic_DNA"/>
</dbReference>
<dbReference type="RefSeq" id="WP_010940372.1">
    <property type="nucleotide sequence ID" value="NC_002937.3"/>
</dbReference>
<dbReference type="RefSeq" id="YP_012324.1">
    <property type="nucleotide sequence ID" value="NC_002937.3"/>
</dbReference>
<dbReference type="SMR" id="Q726J4"/>
<dbReference type="IntAct" id="Q726J4">
    <property type="interactions" value="2"/>
</dbReference>
<dbReference type="STRING" id="882.DVU_3113"/>
<dbReference type="MEROPS" id="C26.954"/>
<dbReference type="PaxDb" id="882-DVU_3113"/>
<dbReference type="EnsemblBacteria" id="AAS97584">
    <property type="protein sequence ID" value="AAS97584"/>
    <property type="gene ID" value="DVU_3113"/>
</dbReference>
<dbReference type="KEGG" id="dvu:DVU_3113"/>
<dbReference type="PATRIC" id="fig|882.5.peg.2824"/>
<dbReference type="eggNOG" id="COG0505">
    <property type="taxonomic scope" value="Bacteria"/>
</dbReference>
<dbReference type="HOGENOM" id="CLU_035901_2_1_7"/>
<dbReference type="OrthoDB" id="9804328at2"/>
<dbReference type="PhylomeDB" id="Q726J4"/>
<dbReference type="UniPathway" id="UPA00068">
    <property type="reaction ID" value="UER00171"/>
</dbReference>
<dbReference type="UniPathway" id="UPA00070">
    <property type="reaction ID" value="UER00115"/>
</dbReference>
<dbReference type="Proteomes" id="UP000002194">
    <property type="component" value="Chromosome"/>
</dbReference>
<dbReference type="GO" id="GO:0005524">
    <property type="term" value="F:ATP binding"/>
    <property type="evidence" value="ECO:0007669"/>
    <property type="project" value="UniProtKB-UniRule"/>
</dbReference>
<dbReference type="GO" id="GO:0004088">
    <property type="term" value="F:carbamoyl-phosphate synthase (glutamine-hydrolyzing) activity"/>
    <property type="evidence" value="ECO:0007669"/>
    <property type="project" value="UniProtKB-UniRule"/>
</dbReference>
<dbReference type="GO" id="GO:0004359">
    <property type="term" value="F:glutaminase activity"/>
    <property type="evidence" value="ECO:0007669"/>
    <property type="project" value="RHEA"/>
</dbReference>
<dbReference type="GO" id="GO:0006207">
    <property type="term" value="P:'de novo' pyrimidine nucleobase biosynthetic process"/>
    <property type="evidence" value="ECO:0007669"/>
    <property type="project" value="InterPro"/>
</dbReference>
<dbReference type="GO" id="GO:0044205">
    <property type="term" value="P:'de novo' UMP biosynthetic process"/>
    <property type="evidence" value="ECO:0007669"/>
    <property type="project" value="UniProtKB-UniRule"/>
</dbReference>
<dbReference type="GO" id="GO:0006541">
    <property type="term" value="P:glutamine metabolic process"/>
    <property type="evidence" value="ECO:0007669"/>
    <property type="project" value="InterPro"/>
</dbReference>
<dbReference type="GO" id="GO:0006526">
    <property type="term" value="P:L-arginine biosynthetic process"/>
    <property type="evidence" value="ECO:0007669"/>
    <property type="project" value="UniProtKB-UniRule"/>
</dbReference>
<dbReference type="CDD" id="cd01744">
    <property type="entry name" value="GATase1_CPSase"/>
    <property type="match status" value="1"/>
</dbReference>
<dbReference type="FunFam" id="3.50.30.20:FF:000001">
    <property type="entry name" value="Carbamoyl-phosphate synthase small chain"/>
    <property type="match status" value="1"/>
</dbReference>
<dbReference type="Gene3D" id="3.40.50.880">
    <property type="match status" value="1"/>
</dbReference>
<dbReference type="Gene3D" id="3.50.30.20">
    <property type="entry name" value="Carbamoyl-phosphate synthase small subunit, N-terminal domain"/>
    <property type="match status" value="1"/>
</dbReference>
<dbReference type="HAMAP" id="MF_01209">
    <property type="entry name" value="CPSase_S_chain"/>
    <property type="match status" value="1"/>
</dbReference>
<dbReference type="InterPro" id="IPR050472">
    <property type="entry name" value="Anth_synth/Amidotransfase"/>
</dbReference>
<dbReference type="InterPro" id="IPR006274">
    <property type="entry name" value="CarbamoylP_synth_ssu"/>
</dbReference>
<dbReference type="InterPro" id="IPR002474">
    <property type="entry name" value="CarbamoylP_synth_ssu_N"/>
</dbReference>
<dbReference type="InterPro" id="IPR036480">
    <property type="entry name" value="CarbP_synth_ssu_N_sf"/>
</dbReference>
<dbReference type="InterPro" id="IPR029062">
    <property type="entry name" value="Class_I_gatase-like"/>
</dbReference>
<dbReference type="InterPro" id="IPR035686">
    <property type="entry name" value="CPSase_GATase1"/>
</dbReference>
<dbReference type="InterPro" id="IPR017926">
    <property type="entry name" value="GATASE"/>
</dbReference>
<dbReference type="NCBIfam" id="TIGR01368">
    <property type="entry name" value="CPSaseIIsmall"/>
    <property type="match status" value="1"/>
</dbReference>
<dbReference type="NCBIfam" id="NF009475">
    <property type="entry name" value="PRK12838.1"/>
    <property type="match status" value="1"/>
</dbReference>
<dbReference type="PANTHER" id="PTHR43418:SF7">
    <property type="entry name" value="CARBAMOYL-PHOSPHATE SYNTHASE SMALL CHAIN"/>
    <property type="match status" value="1"/>
</dbReference>
<dbReference type="PANTHER" id="PTHR43418">
    <property type="entry name" value="MULTIFUNCTIONAL TRYPTOPHAN BIOSYNTHESIS PROTEIN-RELATED"/>
    <property type="match status" value="1"/>
</dbReference>
<dbReference type="Pfam" id="PF00988">
    <property type="entry name" value="CPSase_sm_chain"/>
    <property type="match status" value="1"/>
</dbReference>
<dbReference type="Pfam" id="PF00117">
    <property type="entry name" value="GATase"/>
    <property type="match status" value="1"/>
</dbReference>
<dbReference type="PRINTS" id="PR00097">
    <property type="entry name" value="ANTSNTHASEII"/>
</dbReference>
<dbReference type="PRINTS" id="PR00099">
    <property type="entry name" value="CPSGATASE"/>
</dbReference>
<dbReference type="PRINTS" id="PR00096">
    <property type="entry name" value="GATASE"/>
</dbReference>
<dbReference type="SMART" id="SM01097">
    <property type="entry name" value="CPSase_sm_chain"/>
    <property type="match status" value="1"/>
</dbReference>
<dbReference type="SUPFAM" id="SSF52021">
    <property type="entry name" value="Carbamoyl phosphate synthetase, small subunit N-terminal domain"/>
    <property type="match status" value="1"/>
</dbReference>
<dbReference type="SUPFAM" id="SSF52317">
    <property type="entry name" value="Class I glutamine amidotransferase-like"/>
    <property type="match status" value="1"/>
</dbReference>
<dbReference type="PROSITE" id="PS51273">
    <property type="entry name" value="GATASE_TYPE_1"/>
    <property type="match status" value="1"/>
</dbReference>
<organism>
    <name type="scientific">Nitratidesulfovibrio vulgaris (strain ATCC 29579 / DSM 644 / CCUG 34227 / NCIMB 8303 / VKM B-1760 / Hildenborough)</name>
    <name type="common">Desulfovibrio vulgaris</name>
    <dbReference type="NCBI Taxonomy" id="882"/>
    <lineage>
        <taxon>Bacteria</taxon>
        <taxon>Pseudomonadati</taxon>
        <taxon>Thermodesulfobacteriota</taxon>
        <taxon>Desulfovibrionia</taxon>
        <taxon>Desulfovibrionales</taxon>
        <taxon>Desulfovibrionaceae</taxon>
        <taxon>Nitratidesulfovibrio</taxon>
    </lineage>
</organism>
<feature type="chain" id="PRO_1000138859" description="Carbamoyl phosphate synthase small chain">
    <location>
        <begin position="1"/>
        <end position="375"/>
    </location>
</feature>
<feature type="domain" description="Glutamine amidotransferase type-1" evidence="1">
    <location>
        <begin position="190"/>
        <end position="375"/>
    </location>
</feature>
<feature type="region of interest" description="CPSase" evidence="1">
    <location>
        <begin position="1"/>
        <end position="186"/>
    </location>
</feature>
<feature type="active site" description="Nucleophile" evidence="1">
    <location>
        <position position="265"/>
    </location>
</feature>
<feature type="active site" evidence="1">
    <location>
        <position position="348"/>
    </location>
</feature>
<feature type="active site" evidence="1">
    <location>
        <position position="350"/>
    </location>
</feature>
<feature type="binding site" evidence="1">
    <location>
        <position position="45"/>
    </location>
    <ligand>
        <name>L-glutamine</name>
        <dbReference type="ChEBI" id="CHEBI:58359"/>
    </ligand>
</feature>
<feature type="binding site" evidence="1">
    <location>
        <position position="238"/>
    </location>
    <ligand>
        <name>L-glutamine</name>
        <dbReference type="ChEBI" id="CHEBI:58359"/>
    </ligand>
</feature>
<feature type="binding site" evidence="1">
    <location>
        <position position="240"/>
    </location>
    <ligand>
        <name>L-glutamine</name>
        <dbReference type="ChEBI" id="CHEBI:58359"/>
    </ligand>
</feature>
<feature type="binding site" evidence="1">
    <location>
        <position position="266"/>
    </location>
    <ligand>
        <name>L-glutamine</name>
        <dbReference type="ChEBI" id="CHEBI:58359"/>
    </ligand>
</feature>
<feature type="binding site" evidence="1">
    <location>
        <position position="269"/>
    </location>
    <ligand>
        <name>L-glutamine</name>
        <dbReference type="ChEBI" id="CHEBI:58359"/>
    </ligand>
</feature>
<feature type="binding site" evidence="1">
    <location>
        <position position="307"/>
    </location>
    <ligand>
        <name>L-glutamine</name>
        <dbReference type="ChEBI" id="CHEBI:58359"/>
    </ligand>
</feature>
<feature type="binding site" evidence="1">
    <location>
        <position position="309"/>
    </location>
    <ligand>
        <name>L-glutamine</name>
        <dbReference type="ChEBI" id="CHEBI:58359"/>
    </ligand>
</feature>
<feature type="binding site" evidence="1">
    <location>
        <position position="310"/>
    </location>
    <ligand>
        <name>L-glutamine</name>
        <dbReference type="ChEBI" id="CHEBI:58359"/>
    </ligand>
</feature>
<comment type="function">
    <text evidence="1">Small subunit of the glutamine-dependent carbamoyl phosphate synthetase (CPSase). CPSase catalyzes the formation of carbamoyl phosphate from the ammonia moiety of glutamine, carbonate, and phosphate donated by ATP, constituting the first step of 2 biosynthetic pathways, one leading to arginine and/or urea and the other to pyrimidine nucleotides. The small subunit (glutamine amidotransferase) binds and cleaves glutamine to supply the large subunit with the substrate ammonia.</text>
</comment>
<comment type="catalytic activity">
    <reaction evidence="1">
        <text>hydrogencarbonate + L-glutamine + 2 ATP + H2O = carbamoyl phosphate + L-glutamate + 2 ADP + phosphate + 2 H(+)</text>
        <dbReference type="Rhea" id="RHEA:18633"/>
        <dbReference type="ChEBI" id="CHEBI:15377"/>
        <dbReference type="ChEBI" id="CHEBI:15378"/>
        <dbReference type="ChEBI" id="CHEBI:17544"/>
        <dbReference type="ChEBI" id="CHEBI:29985"/>
        <dbReference type="ChEBI" id="CHEBI:30616"/>
        <dbReference type="ChEBI" id="CHEBI:43474"/>
        <dbReference type="ChEBI" id="CHEBI:58228"/>
        <dbReference type="ChEBI" id="CHEBI:58359"/>
        <dbReference type="ChEBI" id="CHEBI:456216"/>
        <dbReference type="EC" id="6.3.5.5"/>
    </reaction>
</comment>
<comment type="catalytic activity">
    <molecule>Carbamoyl phosphate synthase small chain</molecule>
    <reaction evidence="1">
        <text>L-glutamine + H2O = L-glutamate + NH4(+)</text>
        <dbReference type="Rhea" id="RHEA:15889"/>
        <dbReference type="ChEBI" id="CHEBI:15377"/>
        <dbReference type="ChEBI" id="CHEBI:28938"/>
        <dbReference type="ChEBI" id="CHEBI:29985"/>
        <dbReference type="ChEBI" id="CHEBI:58359"/>
    </reaction>
</comment>
<comment type="pathway">
    <text evidence="1">Amino-acid biosynthesis; L-arginine biosynthesis; carbamoyl phosphate from bicarbonate: step 1/1.</text>
</comment>
<comment type="pathway">
    <text evidence="1">Pyrimidine metabolism; UMP biosynthesis via de novo pathway; (S)-dihydroorotate from bicarbonate: step 1/3.</text>
</comment>
<comment type="subunit">
    <text evidence="1">Composed of two chains; the small (or glutamine) chain promotes the hydrolysis of glutamine to ammonia, which is used by the large (or ammonia) chain to synthesize carbamoyl phosphate. Tetramer of heterodimers (alpha,beta)4.</text>
</comment>
<comment type="interaction">
    <interactant intactId="EBI-10065640">
        <id>Q726J4</id>
    </interactant>
    <interactant intactId="EBI-10065635">
        <id>Q72FQ1</id>
        <label>carB</label>
    </interactant>
    <organismsDiffer>false</organismsDiffer>
    <experiments>4</experiments>
</comment>
<comment type="similarity">
    <text evidence="1">Belongs to the CarA family.</text>
</comment>
<sequence length="375" mass="40745">MRALLALEDGFVLEGRSFTGPGETGGEAIFNTGMTGYQEVLTDPSYAGQMVCMTYPLVGNYGVTREDMESGKVHVEAFIVKECCKVPSNWRSEISLPDYLKRHGVMGIEGIDTRALTRHLRIHGAMRGVISTQETDPARLVERARALPSMEGQNLVTRVAPAAPYRWDGERPQAVTLEPGGCAWVGKGPRLVVYDFGIKWNILRLLAQQGFDMLVVPPSFKAADVAAVGAQAVFLSNGPGDPATLKDEIAEIAKLAQTYPTAGICLGHQLLGHALGGRTMKLKFGHHGCNHPVKDLTTGRIEISSQNHGFCVDIDSLTDVEITHVNLNDGTLEGFAHKTKPVIAVQHHPEASPGPNDSRYFFARFRNMVREAAGC</sequence>